<comment type="function">
    <text evidence="1">The UvrABC repair system catalyzes the recognition and processing of DNA lesions. UvrC both incises the 5' and 3' sides of the lesion. The N-terminal half is responsible for the 3' incision and the C-terminal half is responsible for the 5' incision.</text>
</comment>
<comment type="subunit">
    <text evidence="1">Interacts with UvrB in an incision complex.</text>
</comment>
<comment type="subcellular location">
    <subcellularLocation>
        <location evidence="1">Cytoplasm</location>
    </subcellularLocation>
</comment>
<comment type="similarity">
    <text evidence="1">Belongs to the UvrC family.</text>
</comment>
<sequence length="598" mass="68643">MNERIKNKLALLPDQPGCYLMKDKNGTIIYVGKAKILKNRVRSYFRGSHDTKTERLVSEIDDFEYIVTESNIEALLLEINLIHKNNPKYNIMLKDDKTYPFIKITNEKYPRLMITRKVLKDKALYFGPYPDVNAANETKKLLDRLFPLRKCNPSQKTPCLYYHLGQCLCPYAFDVDPQVYKDMVEEIKGFLSGGHTEIQDRLQEKMAYAAAHMEFEKAAEFRDQIKAIETVMTRQKMTNVDLIDRDVFGYAVDKGWMCVQVFFVRQGKLIERDVSIFPFYDDASEAFLTFIGQFYQENEHFVPKEVLIPDDIDKESVEALLATKVLQPQRGEKKKLVKLASKNAAVALNEKFDLIVRKQERTIGAVEKLGNAMNIPAPIRIEAFDNSNIMGTNPVSAMVVFIDGRPAKNEYRKYKIKTVQGPDDYASMREVIYRRYSRVLKEGLPFPDLILIDGGKGQVDVAKDVLANQLGVDIPVAGLAKNDKHKTSELLFGPNLEVVPLERNSQEFFLLQRIQDEVHRFAITFHRQLRSKNSFASKLDNIEGLGPKRKKNLLKEFKSLKNITAASVEELRKAGLPETVAKNVYRHLHQETTSEIEK</sequence>
<dbReference type="EMBL" id="AE016830">
    <property type="protein sequence ID" value="AAO81197.1"/>
    <property type="molecule type" value="Genomic_DNA"/>
</dbReference>
<dbReference type="RefSeq" id="NP_815127.1">
    <property type="nucleotide sequence ID" value="NC_004668.1"/>
</dbReference>
<dbReference type="RefSeq" id="WP_002357701.1">
    <property type="nucleotide sequence ID" value="NZ_KE136528.1"/>
</dbReference>
<dbReference type="SMR" id="Q835H1"/>
<dbReference type="STRING" id="226185.EF_1406"/>
<dbReference type="EnsemblBacteria" id="AAO81197">
    <property type="protein sequence ID" value="AAO81197"/>
    <property type="gene ID" value="EF_1406"/>
</dbReference>
<dbReference type="KEGG" id="efa:EF1406"/>
<dbReference type="PATRIC" id="fig|226185.45.peg.2095"/>
<dbReference type="eggNOG" id="COG0322">
    <property type="taxonomic scope" value="Bacteria"/>
</dbReference>
<dbReference type="HOGENOM" id="CLU_014841_3_2_9"/>
<dbReference type="Proteomes" id="UP000001415">
    <property type="component" value="Chromosome"/>
</dbReference>
<dbReference type="GO" id="GO:0005737">
    <property type="term" value="C:cytoplasm"/>
    <property type="evidence" value="ECO:0007669"/>
    <property type="project" value="UniProtKB-SubCell"/>
</dbReference>
<dbReference type="GO" id="GO:0009380">
    <property type="term" value="C:excinuclease repair complex"/>
    <property type="evidence" value="ECO:0007669"/>
    <property type="project" value="InterPro"/>
</dbReference>
<dbReference type="GO" id="GO:0003677">
    <property type="term" value="F:DNA binding"/>
    <property type="evidence" value="ECO:0007669"/>
    <property type="project" value="UniProtKB-UniRule"/>
</dbReference>
<dbReference type="GO" id="GO:0009381">
    <property type="term" value="F:excinuclease ABC activity"/>
    <property type="evidence" value="ECO:0007669"/>
    <property type="project" value="UniProtKB-UniRule"/>
</dbReference>
<dbReference type="GO" id="GO:0006289">
    <property type="term" value="P:nucleotide-excision repair"/>
    <property type="evidence" value="ECO:0007669"/>
    <property type="project" value="UniProtKB-UniRule"/>
</dbReference>
<dbReference type="GO" id="GO:0009432">
    <property type="term" value="P:SOS response"/>
    <property type="evidence" value="ECO:0007669"/>
    <property type="project" value="UniProtKB-UniRule"/>
</dbReference>
<dbReference type="CDD" id="cd10434">
    <property type="entry name" value="GIY-YIG_UvrC_Cho"/>
    <property type="match status" value="1"/>
</dbReference>
<dbReference type="FunFam" id="3.30.420.340:FF:000002">
    <property type="entry name" value="UvrABC system protein C"/>
    <property type="match status" value="1"/>
</dbReference>
<dbReference type="FunFam" id="3.40.1440.10:FF:000001">
    <property type="entry name" value="UvrABC system protein C"/>
    <property type="match status" value="1"/>
</dbReference>
<dbReference type="Gene3D" id="1.10.150.20">
    <property type="entry name" value="5' to 3' exonuclease, C-terminal subdomain"/>
    <property type="match status" value="1"/>
</dbReference>
<dbReference type="Gene3D" id="3.40.1440.10">
    <property type="entry name" value="GIY-YIG endonuclease"/>
    <property type="match status" value="1"/>
</dbReference>
<dbReference type="Gene3D" id="4.10.860.10">
    <property type="entry name" value="UVR domain"/>
    <property type="match status" value="1"/>
</dbReference>
<dbReference type="Gene3D" id="3.30.420.340">
    <property type="entry name" value="UvrC, RNAse H endonuclease domain"/>
    <property type="match status" value="1"/>
</dbReference>
<dbReference type="HAMAP" id="MF_00203">
    <property type="entry name" value="UvrC"/>
    <property type="match status" value="1"/>
</dbReference>
<dbReference type="InterPro" id="IPR000305">
    <property type="entry name" value="GIY-YIG_endonuc"/>
</dbReference>
<dbReference type="InterPro" id="IPR035901">
    <property type="entry name" value="GIY-YIG_endonuc_sf"/>
</dbReference>
<dbReference type="InterPro" id="IPR047296">
    <property type="entry name" value="GIY-YIG_UvrC_Cho"/>
</dbReference>
<dbReference type="InterPro" id="IPR010994">
    <property type="entry name" value="RuvA_2-like"/>
</dbReference>
<dbReference type="InterPro" id="IPR001943">
    <property type="entry name" value="UVR_dom"/>
</dbReference>
<dbReference type="InterPro" id="IPR036876">
    <property type="entry name" value="UVR_dom_sf"/>
</dbReference>
<dbReference type="InterPro" id="IPR050066">
    <property type="entry name" value="UvrABC_protein_C"/>
</dbReference>
<dbReference type="InterPro" id="IPR004791">
    <property type="entry name" value="UvrC"/>
</dbReference>
<dbReference type="InterPro" id="IPR001162">
    <property type="entry name" value="UvrC_RNase_H_dom"/>
</dbReference>
<dbReference type="InterPro" id="IPR038476">
    <property type="entry name" value="UvrC_RNase_H_dom_sf"/>
</dbReference>
<dbReference type="NCBIfam" id="TIGR00194">
    <property type="entry name" value="uvrC"/>
    <property type="match status" value="1"/>
</dbReference>
<dbReference type="PANTHER" id="PTHR30562:SF1">
    <property type="entry name" value="UVRABC SYSTEM PROTEIN C"/>
    <property type="match status" value="1"/>
</dbReference>
<dbReference type="PANTHER" id="PTHR30562">
    <property type="entry name" value="UVRC/OXIDOREDUCTASE"/>
    <property type="match status" value="1"/>
</dbReference>
<dbReference type="Pfam" id="PF01541">
    <property type="entry name" value="GIY-YIG"/>
    <property type="match status" value="1"/>
</dbReference>
<dbReference type="Pfam" id="PF14520">
    <property type="entry name" value="HHH_5"/>
    <property type="match status" value="1"/>
</dbReference>
<dbReference type="Pfam" id="PF02151">
    <property type="entry name" value="UVR"/>
    <property type="match status" value="1"/>
</dbReference>
<dbReference type="Pfam" id="PF22920">
    <property type="entry name" value="UvrC_RNaseH"/>
    <property type="match status" value="1"/>
</dbReference>
<dbReference type="Pfam" id="PF08459">
    <property type="entry name" value="UvrC_RNaseH_dom"/>
    <property type="match status" value="1"/>
</dbReference>
<dbReference type="SMART" id="SM00465">
    <property type="entry name" value="GIYc"/>
    <property type="match status" value="1"/>
</dbReference>
<dbReference type="SUPFAM" id="SSF46600">
    <property type="entry name" value="C-terminal UvrC-binding domain of UvrB"/>
    <property type="match status" value="1"/>
</dbReference>
<dbReference type="SUPFAM" id="SSF82771">
    <property type="entry name" value="GIY-YIG endonuclease"/>
    <property type="match status" value="1"/>
</dbReference>
<dbReference type="SUPFAM" id="SSF47781">
    <property type="entry name" value="RuvA domain 2-like"/>
    <property type="match status" value="1"/>
</dbReference>
<dbReference type="PROSITE" id="PS50164">
    <property type="entry name" value="GIY_YIG"/>
    <property type="match status" value="1"/>
</dbReference>
<dbReference type="PROSITE" id="PS50151">
    <property type="entry name" value="UVR"/>
    <property type="match status" value="1"/>
</dbReference>
<dbReference type="PROSITE" id="PS50165">
    <property type="entry name" value="UVRC"/>
    <property type="match status" value="1"/>
</dbReference>
<feature type="chain" id="PRO_0000227429" description="UvrABC system protein C">
    <location>
        <begin position="1"/>
        <end position="598"/>
    </location>
</feature>
<feature type="domain" description="GIY-YIG" evidence="1">
    <location>
        <begin position="14"/>
        <end position="91"/>
    </location>
</feature>
<feature type="domain" description="UVR" evidence="1">
    <location>
        <begin position="196"/>
        <end position="231"/>
    </location>
</feature>
<reference key="1">
    <citation type="journal article" date="2003" name="Science">
        <title>Role of mobile DNA in the evolution of vancomycin-resistant Enterococcus faecalis.</title>
        <authorList>
            <person name="Paulsen I.T."/>
            <person name="Banerjei L."/>
            <person name="Myers G.S.A."/>
            <person name="Nelson K.E."/>
            <person name="Seshadri R."/>
            <person name="Read T.D."/>
            <person name="Fouts D.E."/>
            <person name="Eisen J.A."/>
            <person name="Gill S.R."/>
            <person name="Heidelberg J.F."/>
            <person name="Tettelin H."/>
            <person name="Dodson R.J."/>
            <person name="Umayam L.A."/>
            <person name="Brinkac L.M."/>
            <person name="Beanan M.J."/>
            <person name="Daugherty S.C."/>
            <person name="DeBoy R.T."/>
            <person name="Durkin S.A."/>
            <person name="Kolonay J.F."/>
            <person name="Madupu R."/>
            <person name="Nelson W.C."/>
            <person name="Vamathevan J.J."/>
            <person name="Tran B."/>
            <person name="Upton J."/>
            <person name="Hansen T."/>
            <person name="Shetty J."/>
            <person name="Khouri H.M."/>
            <person name="Utterback T.R."/>
            <person name="Radune D."/>
            <person name="Ketchum K.A."/>
            <person name="Dougherty B.A."/>
            <person name="Fraser C.M."/>
        </authorList>
    </citation>
    <scope>NUCLEOTIDE SEQUENCE [LARGE SCALE GENOMIC DNA]</scope>
    <source>
        <strain>ATCC 700802 / V583</strain>
    </source>
</reference>
<name>UVRC_ENTFA</name>
<keyword id="KW-0963">Cytoplasm</keyword>
<keyword id="KW-0227">DNA damage</keyword>
<keyword id="KW-0228">DNA excision</keyword>
<keyword id="KW-0234">DNA repair</keyword>
<keyword id="KW-0267">Excision nuclease</keyword>
<keyword id="KW-1185">Reference proteome</keyword>
<keyword id="KW-0742">SOS response</keyword>
<gene>
    <name evidence="1" type="primary">uvrC</name>
    <name type="ordered locus">EF_1406</name>
</gene>
<evidence type="ECO:0000255" key="1">
    <source>
        <dbReference type="HAMAP-Rule" id="MF_00203"/>
    </source>
</evidence>
<accession>Q835H1</accession>
<protein>
    <recommendedName>
        <fullName evidence="1">UvrABC system protein C</fullName>
        <shortName evidence="1">Protein UvrC</shortName>
    </recommendedName>
    <alternativeName>
        <fullName evidence="1">Excinuclease ABC subunit C</fullName>
    </alternativeName>
</protein>
<proteinExistence type="inferred from homology"/>
<organism>
    <name type="scientific">Enterococcus faecalis (strain ATCC 700802 / V583)</name>
    <dbReference type="NCBI Taxonomy" id="226185"/>
    <lineage>
        <taxon>Bacteria</taxon>
        <taxon>Bacillati</taxon>
        <taxon>Bacillota</taxon>
        <taxon>Bacilli</taxon>
        <taxon>Lactobacillales</taxon>
        <taxon>Enterococcaceae</taxon>
        <taxon>Enterococcus</taxon>
    </lineage>
</organism>